<reference key="1">
    <citation type="journal article" date="2005" name="Proc. Natl. Acad. Sci. U.S.A.">
        <title>Whole genome sequence of Staphylococcus saprophyticus reveals the pathogenesis of uncomplicated urinary tract infection.</title>
        <authorList>
            <person name="Kuroda M."/>
            <person name="Yamashita A."/>
            <person name="Hirakawa H."/>
            <person name="Kumano M."/>
            <person name="Morikawa K."/>
            <person name="Higashide M."/>
            <person name="Maruyama A."/>
            <person name="Inose Y."/>
            <person name="Matoba K."/>
            <person name="Toh H."/>
            <person name="Kuhara S."/>
            <person name="Hattori M."/>
            <person name="Ohta T."/>
        </authorList>
    </citation>
    <scope>NUCLEOTIDE SEQUENCE [LARGE SCALE GENOMIC DNA]</scope>
    <source>
        <strain>ATCC 15305 / DSM 20229 / NCIMB 8711 / NCTC 7292 / S-41</strain>
    </source>
</reference>
<dbReference type="EC" id="3.1.1.96" evidence="1"/>
<dbReference type="EMBL" id="AP008934">
    <property type="protein sequence ID" value="BAE18271.1"/>
    <property type="molecule type" value="Genomic_DNA"/>
</dbReference>
<dbReference type="RefSeq" id="WP_011302954.1">
    <property type="nucleotide sequence ID" value="NZ_MTGA01000038.1"/>
</dbReference>
<dbReference type="SMR" id="Q49Y71"/>
<dbReference type="GeneID" id="3614968"/>
<dbReference type="KEGG" id="ssp:SSP1126"/>
<dbReference type="PATRIC" id="fig|342451.11.peg.1126"/>
<dbReference type="eggNOG" id="COG1490">
    <property type="taxonomic scope" value="Bacteria"/>
</dbReference>
<dbReference type="HOGENOM" id="CLU_076901_1_0_9"/>
<dbReference type="OrthoDB" id="9801395at2"/>
<dbReference type="Proteomes" id="UP000006371">
    <property type="component" value="Chromosome"/>
</dbReference>
<dbReference type="GO" id="GO:0005737">
    <property type="term" value="C:cytoplasm"/>
    <property type="evidence" value="ECO:0007669"/>
    <property type="project" value="UniProtKB-SubCell"/>
</dbReference>
<dbReference type="GO" id="GO:0051500">
    <property type="term" value="F:D-tyrosyl-tRNA(Tyr) deacylase activity"/>
    <property type="evidence" value="ECO:0007669"/>
    <property type="project" value="TreeGrafter"/>
</dbReference>
<dbReference type="GO" id="GO:0106026">
    <property type="term" value="F:Gly-tRNA(Ala) deacylase activity"/>
    <property type="evidence" value="ECO:0007669"/>
    <property type="project" value="UniProtKB-UniRule"/>
</dbReference>
<dbReference type="GO" id="GO:0043908">
    <property type="term" value="F:Ser(Gly)-tRNA(Ala) hydrolase activity"/>
    <property type="evidence" value="ECO:0007669"/>
    <property type="project" value="UniProtKB-UniRule"/>
</dbReference>
<dbReference type="GO" id="GO:0000049">
    <property type="term" value="F:tRNA binding"/>
    <property type="evidence" value="ECO:0007669"/>
    <property type="project" value="UniProtKB-UniRule"/>
</dbReference>
<dbReference type="GO" id="GO:0019478">
    <property type="term" value="P:D-amino acid catabolic process"/>
    <property type="evidence" value="ECO:0007669"/>
    <property type="project" value="UniProtKB-UniRule"/>
</dbReference>
<dbReference type="CDD" id="cd00563">
    <property type="entry name" value="Dtyr_deacylase"/>
    <property type="match status" value="1"/>
</dbReference>
<dbReference type="FunFam" id="3.50.80.10:FF:000001">
    <property type="entry name" value="D-aminoacyl-tRNA deacylase"/>
    <property type="match status" value="1"/>
</dbReference>
<dbReference type="Gene3D" id="3.50.80.10">
    <property type="entry name" value="D-tyrosyl-tRNA(Tyr) deacylase"/>
    <property type="match status" value="1"/>
</dbReference>
<dbReference type="HAMAP" id="MF_00518">
    <property type="entry name" value="Deacylase_Dtd"/>
    <property type="match status" value="1"/>
</dbReference>
<dbReference type="InterPro" id="IPR003732">
    <property type="entry name" value="Daa-tRNA_deacyls_DTD"/>
</dbReference>
<dbReference type="InterPro" id="IPR023509">
    <property type="entry name" value="DTD-like_sf"/>
</dbReference>
<dbReference type="NCBIfam" id="TIGR00256">
    <property type="entry name" value="D-aminoacyl-tRNA deacylase"/>
    <property type="match status" value="1"/>
</dbReference>
<dbReference type="PANTHER" id="PTHR10472:SF5">
    <property type="entry name" value="D-AMINOACYL-TRNA DEACYLASE 1"/>
    <property type="match status" value="1"/>
</dbReference>
<dbReference type="PANTHER" id="PTHR10472">
    <property type="entry name" value="D-TYROSYL-TRNA TYR DEACYLASE"/>
    <property type="match status" value="1"/>
</dbReference>
<dbReference type="Pfam" id="PF02580">
    <property type="entry name" value="Tyr_Deacylase"/>
    <property type="match status" value="1"/>
</dbReference>
<dbReference type="SUPFAM" id="SSF69500">
    <property type="entry name" value="DTD-like"/>
    <property type="match status" value="1"/>
</dbReference>
<keyword id="KW-0963">Cytoplasm</keyword>
<keyword id="KW-0378">Hydrolase</keyword>
<keyword id="KW-1185">Reference proteome</keyword>
<keyword id="KW-0694">RNA-binding</keyword>
<keyword id="KW-0820">tRNA-binding</keyword>
<organism>
    <name type="scientific">Staphylococcus saprophyticus subsp. saprophyticus (strain ATCC 15305 / DSM 20229 / NCIMB 8711 / NCTC 7292 / S-41)</name>
    <dbReference type="NCBI Taxonomy" id="342451"/>
    <lineage>
        <taxon>Bacteria</taxon>
        <taxon>Bacillati</taxon>
        <taxon>Bacillota</taxon>
        <taxon>Bacilli</taxon>
        <taxon>Bacillales</taxon>
        <taxon>Staphylococcaceae</taxon>
        <taxon>Staphylococcus</taxon>
    </lineage>
</organism>
<protein>
    <recommendedName>
        <fullName evidence="1">D-aminoacyl-tRNA deacylase</fullName>
        <shortName evidence="1">DTD</shortName>
        <ecNumber evidence="1">3.1.1.96</ecNumber>
    </recommendedName>
    <alternativeName>
        <fullName evidence="1">Gly-tRNA(Ala) deacylase</fullName>
    </alternativeName>
</protein>
<feature type="chain" id="PRO_0000259320" description="D-aminoacyl-tRNA deacylase">
    <location>
        <begin position="1"/>
        <end position="150"/>
    </location>
</feature>
<feature type="short sequence motif" description="Gly-cisPro motif, important for rejection of L-amino acids" evidence="1">
    <location>
        <begin position="136"/>
        <end position="137"/>
    </location>
</feature>
<comment type="function">
    <text evidence="1">An aminoacyl-tRNA editing enzyme that deacylates mischarged D-aminoacyl-tRNAs. Also deacylates mischarged glycyl-tRNA(Ala), protecting cells against glycine mischarging by AlaRS. Acts via tRNA-based rather than protein-based catalysis; rejects L-amino acids rather than detecting D-amino acids in the active site. By recycling D-aminoacyl-tRNA to D-amino acids and free tRNA molecules, this enzyme counteracts the toxicity associated with the formation of D-aminoacyl-tRNA entities in vivo and helps enforce protein L-homochirality.</text>
</comment>
<comment type="catalytic activity">
    <reaction evidence="1">
        <text>glycyl-tRNA(Ala) + H2O = tRNA(Ala) + glycine + H(+)</text>
        <dbReference type="Rhea" id="RHEA:53744"/>
        <dbReference type="Rhea" id="RHEA-COMP:9657"/>
        <dbReference type="Rhea" id="RHEA-COMP:13640"/>
        <dbReference type="ChEBI" id="CHEBI:15377"/>
        <dbReference type="ChEBI" id="CHEBI:15378"/>
        <dbReference type="ChEBI" id="CHEBI:57305"/>
        <dbReference type="ChEBI" id="CHEBI:78442"/>
        <dbReference type="ChEBI" id="CHEBI:78522"/>
        <dbReference type="EC" id="3.1.1.96"/>
    </reaction>
</comment>
<comment type="catalytic activity">
    <reaction evidence="1">
        <text>a D-aminoacyl-tRNA + H2O = a tRNA + a D-alpha-amino acid + H(+)</text>
        <dbReference type="Rhea" id="RHEA:13953"/>
        <dbReference type="Rhea" id="RHEA-COMP:10123"/>
        <dbReference type="Rhea" id="RHEA-COMP:10124"/>
        <dbReference type="ChEBI" id="CHEBI:15377"/>
        <dbReference type="ChEBI" id="CHEBI:15378"/>
        <dbReference type="ChEBI" id="CHEBI:59871"/>
        <dbReference type="ChEBI" id="CHEBI:78442"/>
        <dbReference type="ChEBI" id="CHEBI:79333"/>
        <dbReference type="EC" id="3.1.1.96"/>
    </reaction>
</comment>
<comment type="subunit">
    <text evidence="1">Homodimer.</text>
</comment>
<comment type="subcellular location">
    <subcellularLocation>
        <location evidence="1">Cytoplasm</location>
    </subcellularLocation>
</comment>
<comment type="domain">
    <text evidence="1">A Gly-cisPro motif from one monomer fits into the active site of the other monomer to allow specific chiral rejection of L-amino acids.</text>
</comment>
<comment type="similarity">
    <text evidence="1">Belongs to the DTD family.</text>
</comment>
<accession>Q49Y71</accession>
<gene>
    <name evidence="1" type="primary">dtd</name>
    <name type="ordered locus">SSP1126</name>
</gene>
<proteinExistence type="inferred from homology"/>
<evidence type="ECO:0000255" key="1">
    <source>
        <dbReference type="HAMAP-Rule" id="MF_00518"/>
    </source>
</evidence>
<sequence>MRIVVQRVKHASVTNDSVDNKINKGYCLLVGVGKSSTEADIATLAKKIVNARLFEDADGKLNLNLQQVEGEILSISQFTLYADVRKGNRPGFTQSMSPDCANELYEQFNDTLRSYGINVLTGEFGTDMLVDIANDGPVTIIYESQDGKII</sequence>
<name>DTD_STAS1</name>